<protein>
    <recommendedName>
        <fullName>mRNA 3'-end-processing protein RNA14</fullName>
    </recommendedName>
</protein>
<accession>Q759Y6</accession>
<evidence type="ECO:0000250" key="1"/>
<evidence type="ECO:0000256" key="2">
    <source>
        <dbReference type="SAM" id="MobiDB-lite"/>
    </source>
</evidence>
<keyword id="KW-0963">Cytoplasm</keyword>
<keyword id="KW-0507">mRNA processing</keyword>
<keyword id="KW-0539">Nucleus</keyword>
<keyword id="KW-1185">Reference proteome</keyword>
<keyword id="KW-0677">Repeat</keyword>
<feature type="chain" id="PRO_0000238517" description="mRNA 3'-end-processing protein RNA14">
    <location>
        <begin position="1"/>
        <end position="661"/>
    </location>
</feature>
<feature type="repeat" description="HAT 1">
    <location>
        <begin position="67"/>
        <end position="99"/>
    </location>
</feature>
<feature type="repeat" description="HAT 2">
    <location>
        <begin position="101"/>
        <end position="135"/>
    </location>
</feature>
<feature type="repeat" description="HAT 3">
    <location>
        <begin position="149"/>
        <end position="181"/>
    </location>
</feature>
<feature type="repeat" description="HAT 4">
    <location>
        <begin position="192"/>
        <end position="225"/>
    </location>
</feature>
<feature type="repeat" description="HAT 5">
    <location>
        <begin position="262"/>
        <end position="298"/>
    </location>
</feature>
<feature type="repeat" description="HAT 6">
    <location>
        <begin position="307"/>
        <end position="339"/>
    </location>
</feature>
<feature type="repeat" description="HAT 7">
    <location>
        <begin position="513"/>
        <end position="548"/>
    </location>
</feature>
<feature type="region of interest" description="Disordered" evidence="2">
    <location>
        <begin position="1"/>
        <end position="37"/>
    </location>
</feature>
<feature type="compositionally biased region" description="Low complexity" evidence="2">
    <location>
        <begin position="14"/>
        <end position="23"/>
    </location>
</feature>
<organism>
    <name type="scientific">Eremothecium gossypii (strain ATCC 10895 / CBS 109.51 / FGSC 9923 / NRRL Y-1056)</name>
    <name type="common">Yeast</name>
    <name type="synonym">Ashbya gossypii</name>
    <dbReference type="NCBI Taxonomy" id="284811"/>
    <lineage>
        <taxon>Eukaryota</taxon>
        <taxon>Fungi</taxon>
        <taxon>Dikarya</taxon>
        <taxon>Ascomycota</taxon>
        <taxon>Saccharomycotina</taxon>
        <taxon>Saccharomycetes</taxon>
        <taxon>Saccharomycetales</taxon>
        <taxon>Saccharomycetaceae</taxon>
        <taxon>Eremothecium</taxon>
    </lineage>
</organism>
<name>RNA14_EREGS</name>
<dbReference type="EMBL" id="AE016817">
    <property type="protein sequence ID" value="AAS52057.1"/>
    <property type="molecule type" value="Genomic_DNA"/>
</dbReference>
<dbReference type="RefSeq" id="NP_984233.1">
    <property type="nucleotide sequence ID" value="NM_209586.1"/>
</dbReference>
<dbReference type="SMR" id="Q759Y6"/>
<dbReference type="FunCoup" id="Q759Y6">
    <property type="interactions" value="1261"/>
</dbReference>
<dbReference type="STRING" id="284811.Q759Y6"/>
<dbReference type="EnsemblFungi" id="AAS52057">
    <property type="protein sequence ID" value="AAS52057"/>
    <property type="gene ID" value="AGOS_ADR137W"/>
</dbReference>
<dbReference type="GeneID" id="4620394"/>
<dbReference type="KEGG" id="ago:AGOS_ADR137W"/>
<dbReference type="eggNOG" id="KOG1914">
    <property type="taxonomic scope" value="Eukaryota"/>
</dbReference>
<dbReference type="HOGENOM" id="CLU_007630_0_1_1"/>
<dbReference type="InParanoid" id="Q759Y6"/>
<dbReference type="OMA" id="PKRQYFK"/>
<dbReference type="OrthoDB" id="26282at2759"/>
<dbReference type="Proteomes" id="UP000000591">
    <property type="component" value="Chromosome IV"/>
</dbReference>
<dbReference type="GO" id="GO:0005829">
    <property type="term" value="C:cytosol"/>
    <property type="evidence" value="ECO:0007669"/>
    <property type="project" value="EnsemblFungi"/>
</dbReference>
<dbReference type="GO" id="GO:0005739">
    <property type="term" value="C:mitochondrion"/>
    <property type="evidence" value="ECO:0007669"/>
    <property type="project" value="EnsemblFungi"/>
</dbReference>
<dbReference type="GO" id="GO:0005848">
    <property type="term" value="C:mRNA cleavage stimulating factor complex"/>
    <property type="evidence" value="ECO:0007669"/>
    <property type="project" value="EnsemblFungi"/>
</dbReference>
<dbReference type="GO" id="GO:0005634">
    <property type="term" value="C:nucleus"/>
    <property type="evidence" value="ECO:0000318"/>
    <property type="project" value="GO_Central"/>
</dbReference>
<dbReference type="GO" id="GO:0003729">
    <property type="term" value="F:mRNA binding"/>
    <property type="evidence" value="ECO:0000318"/>
    <property type="project" value="GO_Central"/>
</dbReference>
<dbReference type="GO" id="GO:0031124">
    <property type="term" value="P:mRNA 3'-end processing"/>
    <property type="evidence" value="ECO:0007669"/>
    <property type="project" value="EnsemblFungi"/>
</dbReference>
<dbReference type="GO" id="GO:0072423">
    <property type="term" value="P:response to DNA damage checkpoint signaling"/>
    <property type="evidence" value="ECO:0007669"/>
    <property type="project" value="EnsemblFungi"/>
</dbReference>
<dbReference type="GO" id="GO:0031123">
    <property type="term" value="P:RNA 3'-end processing"/>
    <property type="evidence" value="ECO:0000318"/>
    <property type="project" value="GO_Central"/>
</dbReference>
<dbReference type="Gene3D" id="1.25.40.1040">
    <property type="match status" value="1"/>
</dbReference>
<dbReference type="Gene3D" id="6.10.250.1660">
    <property type="match status" value="1"/>
</dbReference>
<dbReference type="InterPro" id="IPR003107">
    <property type="entry name" value="HAT"/>
</dbReference>
<dbReference type="InterPro" id="IPR045243">
    <property type="entry name" value="Rna14-like"/>
</dbReference>
<dbReference type="InterPro" id="IPR008847">
    <property type="entry name" value="Suf"/>
</dbReference>
<dbReference type="InterPro" id="IPR011990">
    <property type="entry name" value="TPR-like_helical_dom_sf"/>
</dbReference>
<dbReference type="PANTHER" id="PTHR19980:SF0">
    <property type="entry name" value="CLEAVAGE STIMULATION FACTOR SUBUNIT 3"/>
    <property type="match status" value="1"/>
</dbReference>
<dbReference type="PANTHER" id="PTHR19980">
    <property type="entry name" value="RNA CLEAVAGE STIMULATION FACTOR"/>
    <property type="match status" value="1"/>
</dbReference>
<dbReference type="Pfam" id="PF05843">
    <property type="entry name" value="Suf"/>
    <property type="match status" value="1"/>
</dbReference>
<dbReference type="SMART" id="SM00386">
    <property type="entry name" value="HAT"/>
    <property type="match status" value="8"/>
</dbReference>
<dbReference type="SUPFAM" id="SSF48452">
    <property type="entry name" value="TPR-like"/>
    <property type="match status" value="1"/>
</dbReference>
<comment type="function">
    <text evidence="1">Component of the cleavage factor IA (CFIA) complex, which is involved in the endonucleolytic cleavage during polyadenylation-dependent pre-mRNA 3'-end formation.</text>
</comment>
<comment type="subcellular location">
    <subcellularLocation>
        <location evidence="1">Nucleus</location>
    </subcellularLocation>
    <subcellularLocation>
        <location evidence="1">Cytoplasm</location>
    </subcellularLocation>
    <text evidence="1">Nucleus and/or cytoplasm.</text>
</comment>
<proteinExistence type="inferred from homology"/>
<reference key="1">
    <citation type="journal article" date="2004" name="Science">
        <title>The Ashbya gossypii genome as a tool for mapping the ancient Saccharomyces cerevisiae genome.</title>
        <authorList>
            <person name="Dietrich F.S."/>
            <person name="Voegeli S."/>
            <person name="Brachat S."/>
            <person name="Lerch A."/>
            <person name="Gates K."/>
            <person name="Steiner S."/>
            <person name="Mohr C."/>
            <person name="Poehlmann R."/>
            <person name="Luedi P."/>
            <person name="Choi S."/>
            <person name="Wing R.A."/>
            <person name="Flavier A."/>
            <person name="Gaffney T.D."/>
            <person name="Philippsen P."/>
        </authorList>
    </citation>
    <scope>NUCLEOTIDE SEQUENCE [LARGE SCALE GENOMIC DNA]</scope>
    <source>
        <strain>ATCC 10895 / CBS 109.51 / FGSC 9923 / NRRL Y-1056</strain>
    </source>
</reference>
<reference key="2">
    <citation type="journal article" date="2013" name="G3 (Bethesda)">
        <title>Genomes of Ashbya fungi isolated from insects reveal four mating-type loci, numerous translocations, lack of transposons, and distinct gene duplications.</title>
        <authorList>
            <person name="Dietrich F.S."/>
            <person name="Voegeli S."/>
            <person name="Kuo S."/>
            <person name="Philippsen P."/>
        </authorList>
    </citation>
    <scope>GENOME REANNOTATION</scope>
    <source>
        <strain>ATCC 10895 / CBS 109.51 / FGSC 9923 / NRRL Y-1056</strain>
    </source>
</reference>
<sequence>MSGNETPDAGTVKSVSPSSGGSSLPARPTLRERDPNDIENRLRDQIEEDPTQILLYIELIKYYVGKQQVAEIREVFGQLHELFPLESFLWTIHLNWELEQEESGQVETLLAKCLSGELMNNDIYLWSTYLGYVRRKNNTVTGGEEARGTVLKAYELVMEKCAVFEPRSMQFWQDYLQFLEQWKPVSKWEEQSRVEILRKLYKRLLCLPVESLERYWEKYTQWEQEVNQLTARKFIGELSASYMNARSLYQEWSNLTKGLRRSLPTKLNQATQQNLPAPGQYDEYQLQIWTKWIQWELDNKLDLPEVVLRQRVEYVHRQAVQHMCFAPEIWYNYAMFVDENEHEKVLEIAVRCNPGSLSLTFKLAEYLELNNKIEALEERFQHCIARISMELQVMNDTTMDPDKILRQTRKLTFAYCVYMTTMKRVTGLSAARKVFSKCRKLKKDISYEIYVENAYMEYYNNSDVTTPCRVLEFGLKYFQDNGNYINKYLDFLILVKQDAQIKSLFESCIDKIYNLDQLKEIYKKVINYESKFGNLNNVYELERRFFEKFPEAEKIEVFTDRYQLQGENLLKRLEFPYLMDEYGIPVLSGYAVKRSLHSAGIVFDDNGSSKRQRQEQTEAVPMEIIELLKVLPKRQYFKTIVLDPHKLADFLSDKVTIPPCD</sequence>
<gene>
    <name type="primary">RNA14</name>
    <name type="ordered locus">ADR137W</name>
</gene>